<evidence type="ECO:0000255" key="1">
    <source>
        <dbReference type="HAMAP-Rule" id="MF_02112"/>
    </source>
</evidence>
<dbReference type="EMBL" id="AP009256">
    <property type="protein sequence ID" value="BAF39327.1"/>
    <property type="molecule type" value="Genomic_DNA"/>
</dbReference>
<dbReference type="RefSeq" id="WP_011742988.1">
    <property type="nucleotide sequence ID" value="NC_008618.1"/>
</dbReference>
<dbReference type="SMR" id="A1A0U4"/>
<dbReference type="STRING" id="367928.BAD_0546"/>
<dbReference type="PaxDb" id="1680-BADO_0559"/>
<dbReference type="GeneID" id="4556126"/>
<dbReference type="KEGG" id="bad:BAD_0546"/>
<dbReference type="HOGENOM" id="CLU_036054_0_0_11"/>
<dbReference type="Proteomes" id="UP000008702">
    <property type="component" value="Chromosome"/>
</dbReference>
<dbReference type="GO" id="GO:0000502">
    <property type="term" value="C:proteasome complex"/>
    <property type="evidence" value="ECO:0007669"/>
    <property type="project" value="InterPro"/>
</dbReference>
<dbReference type="GO" id="GO:0005524">
    <property type="term" value="F:ATP binding"/>
    <property type="evidence" value="ECO:0007669"/>
    <property type="project" value="UniProtKB-UniRule"/>
</dbReference>
<dbReference type="GO" id="GO:0016887">
    <property type="term" value="F:ATP hydrolysis activity"/>
    <property type="evidence" value="ECO:0007669"/>
    <property type="project" value="UniProtKB-UniRule"/>
</dbReference>
<dbReference type="GO" id="GO:0019941">
    <property type="term" value="P:modification-dependent protein catabolic process"/>
    <property type="evidence" value="ECO:0007669"/>
    <property type="project" value="InterPro"/>
</dbReference>
<dbReference type="GO" id="GO:0010498">
    <property type="term" value="P:proteasomal protein catabolic process"/>
    <property type="evidence" value="ECO:0007669"/>
    <property type="project" value="InterPro"/>
</dbReference>
<dbReference type="FunFam" id="3.40.50.300:FF:001025">
    <property type="entry name" value="ATPase family, AAA domain-containing 2B"/>
    <property type="match status" value="1"/>
</dbReference>
<dbReference type="Gene3D" id="1.10.8.60">
    <property type="match status" value="1"/>
</dbReference>
<dbReference type="Gene3D" id="2.40.50.140">
    <property type="entry name" value="Nucleic acid-binding proteins"/>
    <property type="match status" value="2"/>
</dbReference>
<dbReference type="Gene3D" id="3.40.50.300">
    <property type="entry name" value="P-loop containing nucleotide triphosphate hydrolases"/>
    <property type="match status" value="1"/>
</dbReference>
<dbReference type="HAMAP" id="MF_02112">
    <property type="entry name" value="ARC_ATPase"/>
    <property type="match status" value="1"/>
</dbReference>
<dbReference type="InterPro" id="IPR003593">
    <property type="entry name" value="AAA+_ATPase"/>
</dbReference>
<dbReference type="InterPro" id="IPR050168">
    <property type="entry name" value="AAA_ATPase_domain"/>
</dbReference>
<dbReference type="InterPro" id="IPR003959">
    <property type="entry name" value="ATPase_AAA_core"/>
</dbReference>
<dbReference type="InterPro" id="IPR003960">
    <property type="entry name" value="ATPase_AAA_CS"/>
</dbReference>
<dbReference type="InterPro" id="IPR012340">
    <property type="entry name" value="NA-bd_OB-fold"/>
</dbReference>
<dbReference type="InterPro" id="IPR027417">
    <property type="entry name" value="P-loop_NTPase"/>
</dbReference>
<dbReference type="InterPro" id="IPR032501">
    <property type="entry name" value="Prot_ATP_ID_OB_2nd"/>
</dbReference>
<dbReference type="InterPro" id="IPR041626">
    <property type="entry name" value="Prot_ATP_ID_OB_N"/>
</dbReference>
<dbReference type="InterPro" id="IPR022482">
    <property type="entry name" value="Proteasome_ATPase"/>
</dbReference>
<dbReference type="NCBIfam" id="TIGR03689">
    <property type="entry name" value="pup_AAA"/>
    <property type="match status" value="1"/>
</dbReference>
<dbReference type="PANTHER" id="PTHR23077">
    <property type="entry name" value="AAA-FAMILY ATPASE"/>
    <property type="match status" value="1"/>
</dbReference>
<dbReference type="PANTHER" id="PTHR23077:SF144">
    <property type="entry name" value="PROTEASOME-ASSOCIATED ATPASE"/>
    <property type="match status" value="1"/>
</dbReference>
<dbReference type="Pfam" id="PF00004">
    <property type="entry name" value="AAA"/>
    <property type="match status" value="1"/>
</dbReference>
<dbReference type="Pfam" id="PF16450">
    <property type="entry name" value="Prot_ATP_ID_OB_C"/>
    <property type="match status" value="1"/>
</dbReference>
<dbReference type="Pfam" id="PF17758">
    <property type="entry name" value="Prot_ATP_ID_OB_N"/>
    <property type="match status" value="1"/>
</dbReference>
<dbReference type="SMART" id="SM00382">
    <property type="entry name" value="AAA"/>
    <property type="match status" value="1"/>
</dbReference>
<dbReference type="SUPFAM" id="SSF52540">
    <property type="entry name" value="P-loop containing nucleoside triphosphate hydrolases"/>
    <property type="match status" value="1"/>
</dbReference>
<dbReference type="PROSITE" id="PS00674">
    <property type="entry name" value="AAA"/>
    <property type="match status" value="1"/>
</dbReference>
<reference key="1">
    <citation type="submission" date="2006-12" db="EMBL/GenBank/DDBJ databases">
        <title>Bifidobacterium adolescentis complete genome sequence.</title>
        <authorList>
            <person name="Suzuki T."/>
            <person name="Tsuda Y."/>
            <person name="Kanou N."/>
            <person name="Inoue T."/>
            <person name="Kumazaki K."/>
            <person name="Nagano S."/>
            <person name="Hirai S."/>
            <person name="Tanaka K."/>
            <person name="Watanabe K."/>
        </authorList>
    </citation>
    <scope>NUCLEOTIDE SEQUENCE [LARGE SCALE GENOMIC DNA]</scope>
    <source>
        <strain>ATCC 15703 / DSM 20083 / NCTC 11814 / E194a</strain>
    </source>
</reference>
<organism>
    <name type="scientific">Bifidobacterium adolescentis (strain ATCC 15703 / DSM 20083 / NCTC 11814 / E194a)</name>
    <dbReference type="NCBI Taxonomy" id="367928"/>
    <lineage>
        <taxon>Bacteria</taxon>
        <taxon>Bacillati</taxon>
        <taxon>Actinomycetota</taxon>
        <taxon>Actinomycetes</taxon>
        <taxon>Bifidobacteriales</taxon>
        <taxon>Bifidobacteriaceae</taxon>
        <taxon>Bifidobacterium</taxon>
    </lineage>
</organism>
<keyword id="KW-0067">ATP-binding</keyword>
<keyword id="KW-0175">Coiled coil</keyword>
<keyword id="KW-0547">Nucleotide-binding</keyword>
<keyword id="KW-1185">Reference proteome</keyword>
<name>ARC_BIFAA</name>
<comment type="subunit">
    <text evidence="1">Homohexamer. Assembles into a hexameric ring structure.</text>
</comment>
<comment type="similarity">
    <text evidence="1">Belongs to the AAA ATPase family.</text>
</comment>
<proteinExistence type="inferred from homology"/>
<accession>A1A0U4</accession>
<feature type="chain" id="PRO_0000396963" description="AAA ATPase forming ring-shaped complexes">
    <location>
        <begin position="1"/>
        <end position="515"/>
    </location>
</feature>
<feature type="coiled-coil region" evidence="1">
    <location>
        <begin position="2"/>
        <end position="49"/>
    </location>
</feature>
<feature type="binding site" evidence="1">
    <location>
        <begin position="240"/>
        <end position="245"/>
    </location>
    <ligand>
        <name>ATP</name>
        <dbReference type="ChEBI" id="CHEBI:30616"/>
    </ligand>
</feature>
<sequence>MNDHDEETLASLQQANDQLMAKNHALVKALSRATQEMTKTKAQLNQLAGPPMTFATMVRVHSAKTDGQGVQHASAEVAAGARRMIVPIAANLQASRLEPGRTVLLNENMVVVSQLDTDTLGAVRSVRQVCDDGRLLVADGGGNVTLVRCSGTLAKQAISAGDRVNVDASLRFALSLVPPENDDDLVLEEVPDVTFADIGGLDEQIERIRDAVQMPFQHRELFERYDLKPPKGVLLYGPPGNGKTLIAKAVANALAEGTDAGSGVFLSVKGPELLNKFVGESERLIRMIFKRARERAADGKPVIVFIDEMDSLLRTRGTGVSSDVETTIVPQFLTELDGVESLDNVMVIGASNRIDMIDPAVLRPGRLDVKIRVDRPGIQQATQIVRHYLTDKLPLSPNVDAKALIGVLVNDIYAQDEHRHLCDICDDHGQWRPVYLADVVSGAVLKNIVDRAKTYAVKLSITTGQAAAIGINLLAKAVDEEYGETRDALLDADPEQWSRINGLEPGRVTGIRPVA</sequence>
<protein>
    <recommendedName>
        <fullName evidence="1">AAA ATPase forming ring-shaped complexes</fullName>
        <shortName evidence="1">ARC</shortName>
    </recommendedName>
</protein>
<gene>
    <name evidence="1" type="primary">arc</name>
    <name type="ordered locus">BAD_0546</name>
</gene>